<dbReference type="EMBL" id="BA000033">
    <property type="protein sequence ID" value="BAB94875.1"/>
    <property type="molecule type" value="Genomic_DNA"/>
</dbReference>
<dbReference type="RefSeq" id="WP_000290472.1">
    <property type="nucleotide sequence ID" value="NC_003923.1"/>
</dbReference>
<dbReference type="PDB" id="8Y36">
    <property type="method" value="EM"/>
    <property type="resolution" value="2.65 A"/>
    <property type="chains" value="Z=2-49"/>
</dbReference>
<dbReference type="PDB" id="8Y37">
    <property type="method" value="EM"/>
    <property type="resolution" value="2.53 A"/>
    <property type="chains" value="Z=2-49"/>
</dbReference>
<dbReference type="PDB" id="8Y38">
    <property type="method" value="EM"/>
    <property type="resolution" value="2.58 A"/>
    <property type="chains" value="Z=2-49"/>
</dbReference>
<dbReference type="PDB" id="8Y39">
    <property type="method" value="EM"/>
    <property type="resolution" value="3.60 A"/>
    <property type="chains" value="Z=2-49"/>
</dbReference>
<dbReference type="PDBsum" id="8Y36"/>
<dbReference type="PDBsum" id="8Y37"/>
<dbReference type="PDBsum" id="8Y38"/>
<dbReference type="PDBsum" id="8Y39"/>
<dbReference type="EMDB" id="EMD-38873"/>
<dbReference type="EMDB" id="EMD-38874"/>
<dbReference type="EMDB" id="EMD-38875"/>
<dbReference type="EMDB" id="EMD-38876"/>
<dbReference type="SMR" id="P66211"/>
<dbReference type="GeneID" id="98345444"/>
<dbReference type="KEGG" id="sam:MW1010"/>
<dbReference type="HOGENOM" id="CLU_129084_1_3_9"/>
<dbReference type="GO" id="GO:0015934">
    <property type="term" value="C:large ribosomal subunit"/>
    <property type="evidence" value="ECO:0007669"/>
    <property type="project" value="InterPro"/>
</dbReference>
<dbReference type="GO" id="GO:0003735">
    <property type="term" value="F:structural constituent of ribosome"/>
    <property type="evidence" value="ECO:0007669"/>
    <property type="project" value="InterPro"/>
</dbReference>
<dbReference type="GO" id="GO:0006412">
    <property type="term" value="P:translation"/>
    <property type="evidence" value="ECO:0007669"/>
    <property type="project" value="UniProtKB-UniRule"/>
</dbReference>
<dbReference type="Gene3D" id="1.20.5.640">
    <property type="entry name" value="Single helix bin"/>
    <property type="match status" value="1"/>
</dbReference>
<dbReference type="HAMAP" id="MF_00340">
    <property type="entry name" value="Ribosomal_bL32"/>
    <property type="match status" value="1"/>
</dbReference>
<dbReference type="InterPro" id="IPR002677">
    <property type="entry name" value="Ribosomal_bL32"/>
</dbReference>
<dbReference type="InterPro" id="IPR044957">
    <property type="entry name" value="Ribosomal_bL32_bact"/>
</dbReference>
<dbReference type="InterPro" id="IPR011332">
    <property type="entry name" value="Ribosomal_zn-bd"/>
</dbReference>
<dbReference type="NCBIfam" id="TIGR01031">
    <property type="entry name" value="rpmF_bact"/>
    <property type="match status" value="1"/>
</dbReference>
<dbReference type="PANTHER" id="PTHR35534">
    <property type="entry name" value="50S RIBOSOMAL PROTEIN L32"/>
    <property type="match status" value="1"/>
</dbReference>
<dbReference type="PANTHER" id="PTHR35534:SF2">
    <property type="entry name" value="LARGE RIBOSOMAL SUBUNIT PROTEIN BL32"/>
    <property type="match status" value="1"/>
</dbReference>
<dbReference type="Pfam" id="PF01783">
    <property type="entry name" value="Ribosomal_L32p"/>
    <property type="match status" value="1"/>
</dbReference>
<dbReference type="SUPFAM" id="SSF57829">
    <property type="entry name" value="Zn-binding ribosomal proteins"/>
    <property type="match status" value="1"/>
</dbReference>
<organism>
    <name type="scientific">Staphylococcus aureus (strain MW2)</name>
    <dbReference type="NCBI Taxonomy" id="196620"/>
    <lineage>
        <taxon>Bacteria</taxon>
        <taxon>Bacillati</taxon>
        <taxon>Bacillota</taxon>
        <taxon>Bacilli</taxon>
        <taxon>Bacillales</taxon>
        <taxon>Staphylococcaceae</taxon>
        <taxon>Staphylococcus</taxon>
    </lineage>
</organism>
<accession>P66211</accession>
<accession>Q99UX6</accession>
<name>RL32_STAAW</name>
<comment type="similarity">
    <text evidence="1">Belongs to the bacterial ribosomal protein bL32 family.</text>
</comment>
<feature type="chain" id="PRO_0000172407" description="Large ribosomal subunit protein bL32">
    <location>
        <begin position="1"/>
        <end position="57"/>
    </location>
</feature>
<proteinExistence type="evidence at protein level"/>
<reference key="1">
    <citation type="journal article" date="2002" name="Lancet">
        <title>Genome and virulence determinants of high virulence community-acquired MRSA.</title>
        <authorList>
            <person name="Baba T."/>
            <person name="Takeuchi F."/>
            <person name="Kuroda M."/>
            <person name="Yuzawa H."/>
            <person name="Aoki K."/>
            <person name="Oguchi A."/>
            <person name="Nagai Y."/>
            <person name="Iwama N."/>
            <person name="Asano K."/>
            <person name="Naimi T."/>
            <person name="Kuroda H."/>
            <person name="Cui L."/>
            <person name="Yamamoto K."/>
            <person name="Hiramatsu K."/>
        </authorList>
    </citation>
    <scope>NUCLEOTIDE SEQUENCE [LARGE SCALE GENOMIC DNA]</scope>
    <source>
        <strain>MW2</strain>
    </source>
</reference>
<keyword id="KW-0002">3D-structure</keyword>
<keyword id="KW-0687">Ribonucleoprotein</keyword>
<keyword id="KW-0689">Ribosomal protein</keyword>
<gene>
    <name evidence="1" type="primary">rpmF</name>
    <name type="ordered locus">MW1010</name>
</gene>
<protein>
    <recommendedName>
        <fullName evidence="1">Large ribosomal subunit protein bL32</fullName>
    </recommendedName>
    <alternativeName>
        <fullName evidence="2">50S ribosomal protein L32</fullName>
    </alternativeName>
</protein>
<evidence type="ECO:0000255" key="1">
    <source>
        <dbReference type="HAMAP-Rule" id="MF_00340"/>
    </source>
</evidence>
<evidence type="ECO:0000305" key="2"/>
<sequence length="57" mass="6485">MAVPKRRTSKTRKNKRRTHFKISVPGMTECPNCGEYKLSHRVCKNCGSYNGEEVAAK</sequence>